<organism>
    <name type="scientific">Salmonella agona (strain SL483)</name>
    <dbReference type="NCBI Taxonomy" id="454166"/>
    <lineage>
        <taxon>Bacteria</taxon>
        <taxon>Pseudomonadati</taxon>
        <taxon>Pseudomonadota</taxon>
        <taxon>Gammaproteobacteria</taxon>
        <taxon>Enterobacterales</taxon>
        <taxon>Enterobacteriaceae</taxon>
        <taxon>Salmonella</taxon>
    </lineage>
</organism>
<dbReference type="EMBL" id="CP001138">
    <property type="protein sequence ID" value="ACH51923.1"/>
    <property type="molecule type" value="Genomic_DNA"/>
</dbReference>
<dbReference type="RefSeq" id="WP_001118932.1">
    <property type="nucleotide sequence ID" value="NC_011149.1"/>
</dbReference>
<dbReference type="SMR" id="B5F7T2"/>
<dbReference type="GeneID" id="66757762"/>
<dbReference type="KEGG" id="sea:SeAg_B3623"/>
<dbReference type="HOGENOM" id="CLU_139869_0_1_6"/>
<dbReference type="Proteomes" id="UP000008819">
    <property type="component" value="Chromosome"/>
</dbReference>
<dbReference type="GO" id="GO:0005737">
    <property type="term" value="C:cytoplasm"/>
    <property type="evidence" value="ECO:0007669"/>
    <property type="project" value="UniProtKB-ARBA"/>
</dbReference>
<dbReference type="GO" id="GO:0015935">
    <property type="term" value="C:small ribosomal subunit"/>
    <property type="evidence" value="ECO:0007669"/>
    <property type="project" value="TreeGrafter"/>
</dbReference>
<dbReference type="GO" id="GO:0019843">
    <property type="term" value="F:rRNA binding"/>
    <property type="evidence" value="ECO:0007669"/>
    <property type="project" value="UniProtKB-UniRule"/>
</dbReference>
<dbReference type="GO" id="GO:0003735">
    <property type="term" value="F:structural constituent of ribosome"/>
    <property type="evidence" value="ECO:0007669"/>
    <property type="project" value="InterPro"/>
</dbReference>
<dbReference type="GO" id="GO:0006412">
    <property type="term" value="P:translation"/>
    <property type="evidence" value="ECO:0007669"/>
    <property type="project" value="UniProtKB-UniRule"/>
</dbReference>
<dbReference type="FunFam" id="1.10.287.1480:FF:000001">
    <property type="entry name" value="30S ribosomal protein S14"/>
    <property type="match status" value="1"/>
</dbReference>
<dbReference type="Gene3D" id="1.10.287.1480">
    <property type="match status" value="1"/>
</dbReference>
<dbReference type="HAMAP" id="MF_00537">
    <property type="entry name" value="Ribosomal_uS14_1"/>
    <property type="match status" value="1"/>
</dbReference>
<dbReference type="InterPro" id="IPR001209">
    <property type="entry name" value="Ribosomal_uS14"/>
</dbReference>
<dbReference type="InterPro" id="IPR023036">
    <property type="entry name" value="Ribosomal_uS14_bac/plastid"/>
</dbReference>
<dbReference type="InterPro" id="IPR018271">
    <property type="entry name" value="Ribosomal_uS14_CS"/>
</dbReference>
<dbReference type="NCBIfam" id="NF006477">
    <property type="entry name" value="PRK08881.1"/>
    <property type="match status" value="1"/>
</dbReference>
<dbReference type="PANTHER" id="PTHR19836">
    <property type="entry name" value="30S RIBOSOMAL PROTEIN S14"/>
    <property type="match status" value="1"/>
</dbReference>
<dbReference type="PANTHER" id="PTHR19836:SF19">
    <property type="entry name" value="SMALL RIBOSOMAL SUBUNIT PROTEIN US14M"/>
    <property type="match status" value="1"/>
</dbReference>
<dbReference type="Pfam" id="PF00253">
    <property type="entry name" value="Ribosomal_S14"/>
    <property type="match status" value="1"/>
</dbReference>
<dbReference type="SUPFAM" id="SSF57716">
    <property type="entry name" value="Glucocorticoid receptor-like (DNA-binding domain)"/>
    <property type="match status" value="1"/>
</dbReference>
<dbReference type="PROSITE" id="PS00527">
    <property type="entry name" value="RIBOSOMAL_S14"/>
    <property type="match status" value="1"/>
</dbReference>
<accession>B5F7T2</accession>
<keyword id="KW-0687">Ribonucleoprotein</keyword>
<keyword id="KW-0689">Ribosomal protein</keyword>
<keyword id="KW-0694">RNA-binding</keyword>
<keyword id="KW-0699">rRNA-binding</keyword>
<protein>
    <recommendedName>
        <fullName evidence="1">Small ribosomal subunit protein uS14</fullName>
    </recommendedName>
    <alternativeName>
        <fullName evidence="2">30S ribosomal protein S14</fullName>
    </alternativeName>
</protein>
<reference key="1">
    <citation type="journal article" date="2011" name="J. Bacteriol.">
        <title>Comparative genomics of 28 Salmonella enterica isolates: evidence for CRISPR-mediated adaptive sublineage evolution.</title>
        <authorList>
            <person name="Fricke W.F."/>
            <person name="Mammel M.K."/>
            <person name="McDermott P.F."/>
            <person name="Tartera C."/>
            <person name="White D.G."/>
            <person name="Leclerc J.E."/>
            <person name="Ravel J."/>
            <person name="Cebula T.A."/>
        </authorList>
    </citation>
    <scope>NUCLEOTIDE SEQUENCE [LARGE SCALE GENOMIC DNA]</scope>
    <source>
        <strain>SL483</strain>
    </source>
</reference>
<name>RS14_SALA4</name>
<proteinExistence type="inferred from homology"/>
<comment type="function">
    <text evidence="1">Binds 16S rRNA, required for the assembly of 30S particles and may also be responsible for determining the conformation of the 16S rRNA at the A site.</text>
</comment>
<comment type="subunit">
    <text evidence="1">Part of the 30S ribosomal subunit. Contacts proteins S3 and S10.</text>
</comment>
<comment type="similarity">
    <text evidence="1">Belongs to the universal ribosomal protein uS14 family.</text>
</comment>
<gene>
    <name evidence="1" type="primary">rpsN</name>
    <name type="ordered locus">SeAg_B3623</name>
</gene>
<feature type="chain" id="PRO_1000128555" description="Small ribosomal subunit protein uS14">
    <location>
        <begin position="1"/>
        <end position="101"/>
    </location>
</feature>
<sequence length="101" mass="11609">MAKQSMKAREVKRVALADKYFAKRAELKAIISDVNATDEDRWNAVLKLQTLPRDSSPSRQRNRCRQTGRPHAFLRKFGLSRIKVREAAMRGEIPGLKKASW</sequence>
<evidence type="ECO:0000255" key="1">
    <source>
        <dbReference type="HAMAP-Rule" id="MF_00537"/>
    </source>
</evidence>
<evidence type="ECO:0000305" key="2"/>